<name>LLOS_PICGL</name>
<sequence length="627" mass="71653">MAFVSIAPLASRCCVHKSFVSSREVKPLCRTIPTLGRCRRGKTVTPSISMCWTATVLDDGVQRRIANHHSNLWDDSFIQSLSTPYGETSYLERADKLIGEVKEIINSISVEDGELITPLNDLIQRLSIVDIIERLGIDRHFKNEIKSALDYVYSYWNEKGIGCGRECVITHLNSTALGLRTLRLHGYPVSSDVLEQFKDQNGQFACSAIQTEGEIKSVLNLFRASLIAFPGEKVMEEAEIFSTIYLKEALLTIPVCSLSREIAYVLEHGWHTNLPRLEARNYIDVFGQDPIYGTPNIKMTQKLLEIAKLEFNIFHSLQQKELKHLSRWWKDSVFSQLAFPRHRHVEYYTLASCIDIDPQHSSFRLGFAKISHLGTVLDDIYDTFGTMDELELFTAAVKRWHPSATKWLPEYMKGVYMMLYETVNEMAREADKSQGRDTLNYARQAWEAYIDSYMKEAKWISSGFLPTFEEYLDNGKVSFGYRIGTLQPILTLGTPFPHHILQEIDFPSSLNDLACSILRLKGDILTYQAERSRGEKSSCISCYMKDNPGSTEEDAVAYINGMVNKSLKELNWEFLRPDSNAPITSKKHAFDILRAFYHLYKHRDGFSVARNEIRNLVKTTVIEPVPL</sequence>
<protein>
    <recommendedName>
        <fullName evidence="5">(R)-linalool synthase, chloroplastic</fullName>
        <ecNumber evidence="4">4.2.3.26</ecNumber>
    </recommendedName>
    <alternativeName>
        <fullName evidence="5">Terpene synthase TPS-Lin</fullName>
        <shortName evidence="5">PgTPS-Lin</shortName>
    </alternativeName>
</protein>
<gene>
    <name evidence="5" type="primary">TPS-Lin</name>
</gene>
<reference key="1">
    <citation type="journal article" date="2011" name="BMC Plant Biol.">
        <title>Transcriptome mining, functional characterization, and phylogeny of a large terpene synthase gene family in spruce (Picea spp.).</title>
        <authorList>
            <person name="Keeling C.I."/>
            <person name="Weisshaar S."/>
            <person name="Ralph S.G."/>
            <person name="Jancsik S."/>
            <person name="Hamberger B."/>
            <person name="Dullat H.K."/>
            <person name="Bohlmann J."/>
        </authorList>
    </citation>
    <scope>NUCLEOTIDE SEQUENCE [MRNA]</scope>
    <scope>CATALYTIC ACTIVITY</scope>
    <scope>FUNCTION</scope>
    <scope>PATHWAY</scope>
    <scope>GENE FAMILY</scope>
    <source>
        <strain>cv. PG29</strain>
    </source>
</reference>
<dbReference type="EC" id="4.2.3.26" evidence="4"/>
<dbReference type="EMBL" id="HQ426151">
    <property type="protein sequence ID" value="ADZ45500.1"/>
    <property type="molecule type" value="mRNA"/>
</dbReference>
<dbReference type="SMR" id="F2XF93"/>
<dbReference type="UniPathway" id="UPA00924"/>
<dbReference type="GO" id="GO:0009507">
    <property type="term" value="C:chloroplast"/>
    <property type="evidence" value="ECO:0007669"/>
    <property type="project" value="UniProtKB-SubCell"/>
</dbReference>
<dbReference type="GO" id="GO:0016829">
    <property type="term" value="F:lyase activity"/>
    <property type="evidence" value="ECO:0000314"/>
    <property type="project" value="UniProtKB"/>
</dbReference>
<dbReference type="GO" id="GO:0000287">
    <property type="term" value="F:magnesium ion binding"/>
    <property type="evidence" value="ECO:0007669"/>
    <property type="project" value="InterPro"/>
</dbReference>
<dbReference type="GO" id="GO:0034008">
    <property type="term" value="F:R-linalool synthase activity"/>
    <property type="evidence" value="ECO:0000314"/>
    <property type="project" value="UniProtKB"/>
</dbReference>
<dbReference type="GO" id="GO:0010333">
    <property type="term" value="F:terpene synthase activity"/>
    <property type="evidence" value="ECO:0007669"/>
    <property type="project" value="InterPro"/>
</dbReference>
<dbReference type="GO" id="GO:0016102">
    <property type="term" value="P:diterpenoid biosynthetic process"/>
    <property type="evidence" value="ECO:0007669"/>
    <property type="project" value="InterPro"/>
</dbReference>
<dbReference type="GO" id="GO:0010597">
    <property type="term" value="P:green leaf volatile biosynthetic process"/>
    <property type="evidence" value="ECO:0000314"/>
    <property type="project" value="UniProtKB"/>
</dbReference>
<dbReference type="GO" id="GO:0016099">
    <property type="term" value="P:monoterpenoid biosynthetic process"/>
    <property type="evidence" value="ECO:0000314"/>
    <property type="project" value="UniProtKB"/>
</dbReference>
<dbReference type="CDD" id="cd00684">
    <property type="entry name" value="Terpene_cyclase_plant_C1"/>
    <property type="match status" value="1"/>
</dbReference>
<dbReference type="FunFam" id="1.50.10.130:FF:000004">
    <property type="entry name" value="Carene synthase, chloroplastic"/>
    <property type="match status" value="1"/>
</dbReference>
<dbReference type="FunFam" id="1.10.600.10:FF:000005">
    <property type="entry name" value="Ent-kaur-16-ene synthase, chloroplastic"/>
    <property type="match status" value="1"/>
</dbReference>
<dbReference type="Gene3D" id="1.10.600.10">
    <property type="entry name" value="Farnesyl Diphosphate Synthase"/>
    <property type="match status" value="1"/>
</dbReference>
<dbReference type="Gene3D" id="1.50.10.130">
    <property type="entry name" value="Terpene synthase, N-terminal domain"/>
    <property type="match status" value="1"/>
</dbReference>
<dbReference type="InterPro" id="IPR008949">
    <property type="entry name" value="Isoprenoid_synthase_dom_sf"/>
</dbReference>
<dbReference type="InterPro" id="IPR034741">
    <property type="entry name" value="Terpene_cyclase-like_1_C"/>
</dbReference>
<dbReference type="InterPro" id="IPR044814">
    <property type="entry name" value="Terpene_cyclase_plant_C1"/>
</dbReference>
<dbReference type="InterPro" id="IPR001906">
    <property type="entry name" value="Terpene_synth_N"/>
</dbReference>
<dbReference type="InterPro" id="IPR036965">
    <property type="entry name" value="Terpene_synth_N_sf"/>
</dbReference>
<dbReference type="InterPro" id="IPR050148">
    <property type="entry name" value="Terpene_synthase-like"/>
</dbReference>
<dbReference type="InterPro" id="IPR005630">
    <property type="entry name" value="Terpene_synthase_metal-bd"/>
</dbReference>
<dbReference type="InterPro" id="IPR008930">
    <property type="entry name" value="Terpenoid_cyclase/PrenylTrfase"/>
</dbReference>
<dbReference type="PANTHER" id="PTHR31739:SF25">
    <property type="entry name" value="(E,E)-GERANYLLINALOOL SYNTHASE"/>
    <property type="match status" value="1"/>
</dbReference>
<dbReference type="PANTHER" id="PTHR31739">
    <property type="entry name" value="ENT-COPALYL DIPHOSPHATE SYNTHASE, CHLOROPLASTIC"/>
    <property type="match status" value="1"/>
</dbReference>
<dbReference type="Pfam" id="PF01397">
    <property type="entry name" value="Terpene_synth"/>
    <property type="match status" value="1"/>
</dbReference>
<dbReference type="Pfam" id="PF03936">
    <property type="entry name" value="Terpene_synth_C"/>
    <property type="match status" value="1"/>
</dbReference>
<dbReference type="SFLD" id="SFLDS00005">
    <property type="entry name" value="Isoprenoid_Synthase_Type_I"/>
    <property type="match status" value="1"/>
</dbReference>
<dbReference type="SFLD" id="SFLDG01019">
    <property type="entry name" value="Terpene_Cyclase_Like_1_C_Termi"/>
    <property type="match status" value="1"/>
</dbReference>
<dbReference type="SFLD" id="SFLDG01014">
    <property type="entry name" value="Terpene_Cyclase_Like_1_N-term"/>
    <property type="match status" value="1"/>
</dbReference>
<dbReference type="SUPFAM" id="SSF48239">
    <property type="entry name" value="Terpenoid cyclases/Protein prenyltransferases"/>
    <property type="match status" value="1"/>
</dbReference>
<dbReference type="SUPFAM" id="SSF48576">
    <property type="entry name" value="Terpenoid synthases"/>
    <property type="match status" value="1"/>
</dbReference>
<comment type="function">
    <text evidence="4">Terpene synthase (TPS) involved in the biosynthesis of monoterpene natural products included in conifer oleoresin secretions and volatile emissions; these compounds contribute to biotic and abiotic stress defense against herbivores and pathogens (PubMed:21385377). Catalyzes the conversion of (2E)-geranyl diphosphate (GPP) to (R)-linalool (PubMed:21385377).</text>
</comment>
<comment type="catalytic activity">
    <reaction evidence="4">
        <text>(2E)-geranyl diphosphate + H2O = (R)-linalool + diphosphate</text>
        <dbReference type="Rhea" id="RHEA:15809"/>
        <dbReference type="ChEBI" id="CHEBI:28"/>
        <dbReference type="ChEBI" id="CHEBI:15377"/>
        <dbReference type="ChEBI" id="CHEBI:33019"/>
        <dbReference type="ChEBI" id="CHEBI:58057"/>
        <dbReference type="EC" id="4.2.3.26"/>
    </reaction>
</comment>
<comment type="cofactor">
    <cofactor evidence="1">
        <name>Mg(2+)</name>
        <dbReference type="ChEBI" id="CHEBI:18420"/>
    </cofactor>
    <cofactor evidence="1">
        <name>Mn(2+)</name>
        <dbReference type="ChEBI" id="CHEBI:29035"/>
    </cofactor>
    <text evidence="1">Binds 3 Mg(2+) or Mn(2+) ions per subunit.</text>
</comment>
<comment type="pathway">
    <text evidence="4">Terpene metabolism; oleoresin biosynthesis.</text>
</comment>
<comment type="subcellular location">
    <subcellularLocation>
        <location evidence="3">Plastid</location>
        <location evidence="3">Chloroplast</location>
    </subcellularLocation>
</comment>
<comment type="domain">
    <text evidence="1">The Asp-Asp-Xaa-Xaa-Asp/Glu (DDXXD/E) motif is important for the catalytic activity, presumably through binding to Mg(2+).</text>
</comment>
<comment type="similarity">
    <text evidence="6">Belongs to the terpene synthase family. Tpsd subfamily.</text>
</comment>
<evidence type="ECO:0000250" key="1">
    <source>
        <dbReference type="UniProtKB" id="A0A1C9J6A7"/>
    </source>
</evidence>
<evidence type="ECO:0000250" key="2">
    <source>
        <dbReference type="UniProtKB" id="Q40577"/>
    </source>
</evidence>
<evidence type="ECO:0000255" key="3"/>
<evidence type="ECO:0000269" key="4">
    <source>
    </source>
</evidence>
<evidence type="ECO:0000303" key="5">
    <source>
    </source>
</evidence>
<evidence type="ECO:0000305" key="6"/>
<accession>F2XF93</accession>
<organism>
    <name type="scientific">Picea glauca</name>
    <name type="common">White spruce</name>
    <name type="synonym">Pinus glauca</name>
    <dbReference type="NCBI Taxonomy" id="3330"/>
    <lineage>
        <taxon>Eukaryota</taxon>
        <taxon>Viridiplantae</taxon>
        <taxon>Streptophyta</taxon>
        <taxon>Embryophyta</taxon>
        <taxon>Tracheophyta</taxon>
        <taxon>Spermatophyta</taxon>
        <taxon>Pinopsida</taxon>
        <taxon>Pinidae</taxon>
        <taxon>Conifers I</taxon>
        <taxon>Pinales</taxon>
        <taxon>Pinaceae</taxon>
        <taxon>Picea</taxon>
    </lineage>
</organism>
<feature type="transit peptide" description="Chloroplast" evidence="3">
    <location>
        <begin position="1"/>
        <end position="21"/>
    </location>
</feature>
<feature type="chain" id="PRO_0000454412" description="(R)-linalool synthase, chloroplastic">
    <location>
        <begin position="22"/>
        <end position="627"/>
    </location>
</feature>
<feature type="short sequence motif" description="DDXXD motif" evidence="1">
    <location>
        <begin position="378"/>
        <end position="382"/>
    </location>
</feature>
<feature type="binding site" evidence="2">
    <location>
        <position position="378"/>
    </location>
    <ligand>
        <name>Mg(2+)</name>
        <dbReference type="ChEBI" id="CHEBI:18420"/>
        <label>1</label>
    </ligand>
</feature>
<feature type="binding site" evidence="2">
    <location>
        <position position="378"/>
    </location>
    <ligand>
        <name>Mg(2+)</name>
        <dbReference type="ChEBI" id="CHEBI:18420"/>
        <label>2</label>
    </ligand>
</feature>
<feature type="binding site" evidence="2">
    <location>
        <position position="382"/>
    </location>
    <ligand>
        <name>Mg(2+)</name>
        <dbReference type="ChEBI" id="CHEBI:18420"/>
        <label>1</label>
    </ligand>
</feature>
<feature type="binding site" evidence="2">
    <location>
        <position position="382"/>
    </location>
    <ligand>
        <name>Mg(2+)</name>
        <dbReference type="ChEBI" id="CHEBI:18420"/>
        <label>2</label>
    </ligand>
</feature>
<feature type="binding site" evidence="2">
    <location>
        <position position="530"/>
    </location>
    <ligand>
        <name>Mg(2+)</name>
        <dbReference type="ChEBI" id="CHEBI:18420"/>
        <label>3</label>
    </ligand>
</feature>
<proteinExistence type="evidence at protein level"/>
<keyword id="KW-0150">Chloroplast</keyword>
<keyword id="KW-0456">Lyase</keyword>
<keyword id="KW-0460">Magnesium</keyword>
<keyword id="KW-0479">Metal-binding</keyword>
<keyword id="KW-0934">Plastid</keyword>
<keyword id="KW-0809">Transit peptide</keyword>